<name>RL16_VIBVY</name>
<sequence>MLQPKRTKFRKVHTGRNRGLAKGTEVSFGSFGLKAVGRGRLTARQIEAARRAMTRHIKRQGKIWIRVFPDKPITEKPLEVRQGKGKGNVEYWVAQIQPGKVMYEVDGVPEELAREAFRLAARKLPFKTTFVTKQVM</sequence>
<gene>
    <name evidence="1" type="primary">rplP</name>
    <name type="ordered locus">VV0382</name>
</gene>
<evidence type="ECO:0000255" key="1">
    <source>
        <dbReference type="HAMAP-Rule" id="MF_01342"/>
    </source>
</evidence>
<evidence type="ECO:0000305" key="2"/>
<accession>Q7MPI1</accession>
<keyword id="KW-0687">Ribonucleoprotein</keyword>
<keyword id="KW-0689">Ribosomal protein</keyword>
<keyword id="KW-0694">RNA-binding</keyword>
<keyword id="KW-0699">rRNA-binding</keyword>
<keyword id="KW-0820">tRNA-binding</keyword>
<proteinExistence type="inferred from homology"/>
<organism>
    <name type="scientific">Vibrio vulnificus (strain YJ016)</name>
    <dbReference type="NCBI Taxonomy" id="196600"/>
    <lineage>
        <taxon>Bacteria</taxon>
        <taxon>Pseudomonadati</taxon>
        <taxon>Pseudomonadota</taxon>
        <taxon>Gammaproteobacteria</taxon>
        <taxon>Vibrionales</taxon>
        <taxon>Vibrionaceae</taxon>
        <taxon>Vibrio</taxon>
    </lineage>
</organism>
<feature type="chain" id="PRO_0000062248" description="Large ribosomal subunit protein uL16">
    <location>
        <begin position="1"/>
        <end position="136"/>
    </location>
</feature>
<protein>
    <recommendedName>
        <fullName evidence="1">Large ribosomal subunit protein uL16</fullName>
    </recommendedName>
    <alternativeName>
        <fullName evidence="2">50S ribosomal protein L16</fullName>
    </alternativeName>
</protein>
<dbReference type="EMBL" id="BA000037">
    <property type="protein sequence ID" value="BAC93146.1"/>
    <property type="molecule type" value="Genomic_DNA"/>
</dbReference>
<dbReference type="RefSeq" id="WP_004728605.1">
    <property type="nucleotide sequence ID" value="NC_005139.1"/>
</dbReference>
<dbReference type="SMR" id="Q7MPI1"/>
<dbReference type="STRING" id="672.VV93_v1c03530"/>
<dbReference type="GeneID" id="95678954"/>
<dbReference type="KEGG" id="vvy:VV0382"/>
<dbReference type="eggNOG" id="COG0197">
    <property type="taxonomic scope" value="Bacteria"/>
</dbReference>
<dbReference type="HOGENOM" id="CLU_078858_2_1_6"/>
<dbReference type="Proteomes" id="UP000002675">
    <property type="component" value="Chromosome I"/>
</dbReference>
<dbReference type="GO" id="GO:0022625">
    <property type="term" value="C:cytosolic large ribosomal subunit"/>
    <property type="evidence" value="ECO:0007669"/>
    <property type="project" value="TreeGrafter"/>
</dbReference>
<dbReference type="GO" id="GO:0019843">
    <property type="term" value="F:rRNA binding"/>
    <property type="evidence" value="ECO:0007669"/>
    <property type="project" value="UniProtKB-UniRule"/>
</dbReference>
<dbReference type="GO" id="GO:0003735">
    <property type="term" value="F:structural constituent of ribosome"/>
    <property type="evidence" value="ECO:0007669"/>
    <property type="project" value="InterPro"/>
</dbReference>
<dbReference type="GO" id="GO:0000049">
    <property type="term" value="F:tRNA binding"/>
    <property type="evidence" value="ECO:0007669"/>
    <property type="project" value="UniProtKB-KW"/>
</dbReference>
<dbReference type="GO" id="GO:0006412">
    <property type="term" value="P:translation"/>
    <property type="evidence" value="ECO:0007669"/>
    <property type="project" value="UniProtKB-UniRule"/>
</dbReference>
<dbReference type="CDD" id="cd01433">
    <property type="entry name" value="Ribosomal_L16_L10e"/>
    <property type="match status" value="1"/>
</dbReference>
<dbReference type="FunFam" id="3.90.1170.10:FF:000001">
    <property type="entry name" value="50S ribosomal protein L16"/>
    <property type="match status" value="1"/>
</dbReference>
<dbReference type="Gene3D" id="3.90.1170.10">
    <property type="entry name" value="Ribosomal protein L10e/L16"/>
    <property type="match status" value="1"/>
</dbReference>
<dbReference type="HAMAP" id="MF_01342">
    <property type="entry name" value="Ribosomal_uL16"/>
    <property type="match status" value="1"/>
</dbReference>
<dbReference type="InterPro" id="IPR047873">
    <property type="entry name" value="Ribosomal_uL16"/>
</dbReference>
<dbReference type="InterPro" id="IPR000114">
    <property type="entry name" value="Ribosomal_uL16_bact-type"/>
</dbReference>
<dbReference type="InterPro" id="IPR020798">
    <property type="entry name" value="Ribosomal_uL16_CS"/>
</dbReference>
<dbReference type="InterPro" id="IPR016180">
    <property type="entry name" value="Ribosomal_uL16_dom"/>
</dbReference>
<dbReference type="InterPro" id="IPR036920">
    <property type="entry name" value="Ribosomal_uL16_sf"/>
</dbReference>
<dbReference type="NCBIfam" id="TIGR01164">
    <property type="entry name" value="rplP_bact"/>
    <property type="match status" value="1"/>
</dbReference>
<dbReference type="PANTHER" id="PTHR12220">
    <property type="entry name" value="50S/60S RIBOSOMAL PROTEIN L16"/>
    <property type="match status" value="1"/>
</dbReference>
<dbReference type="PANTHER" id="PTHR12220:SF13">
    <property type="entry name" value="LARGE RIBOSOMAL SUBUNIT PROTEIN UL16M"/>
    <property type="match status" value="1"/>
</dbReference>
<dbReference type="Pfam" id="PF00252">
    <property type="entry name" value="Ribosomal_L16"/>
    <property type="match status" value="1"/>
</dbReference>
<dbReference type="PRINTS" id="PR00060">
    <property type="entry name" value="RIBOSOMALL16"/>
</dbReference>
<dbReference type="SUPFAM" id="SSF54686">
    <property type="entry name" value="Ribosomal protein L16p/L10e"/>
    <property type="match status" value="1"/>
</dbReference>
<dbReference type="PROSITE" id="PS00586">
    <property type="entry name" value="RIBOSOMAL_L16_1"/>
    <property type="match status" value="1"/>
</dbReference>
<comment type="function">
    <text evidence="1">Binds 23S rRNA and is also seen to make contacts with the A and possibly P site tRNAs.</text>
</comment>
<comment type="subunit">
    <text evidence="1">Part of the 50S ribosomal subunit.</text>
</comment>
<comment type="similarity">
    <text evidence="1">Belongs to the universal ribosomal protein uL16 family.</text>
</comment>
<reference key="1">
    <citation type="journal article" date="2003" name="Genome Res.">
        <title>Comparative genome analysis of Vibrio vulnificus, a marine pathogen.</title>
        <authorList>
            <person name="Chen C.-Y."/>
            <person name="Wu K.-M."/>
            <person name="Chang Y.-C."/>
            <person name="Chang C.-H."/>
            <person name="Tsai H.-C."/>
            <person name="Liao T.-L."/>
            <person name="Liu Y.-M."/>
            <person name="Chen H.-J."/>
            <person name="Shen A.B.-T."/>
            <person name="Li J.-C."/>
            <person name="Su T.-L."/>
            <person name="Shao C.-P."/>
            <person name="Lee C.-T."/>
            <person name="Hor L.-I."/>
            <person name="Tsai S.-F."/>
        </authorList>
    </citation>
    <scope>NUCLEOTIDE SEQUENCE [LARGE SCALE GENOMIC DNA]</scope>
    <source>
        <strain>YJ016</strain>
    </source>
</reference>